<accession>Q0DWT8</accession>
<accession>B7EXU1</accession>
<accession>Q6K8Y3</accession>
<protein>
    <recommendedName>
        <fullName>DEAD-box ATP-dependent RNA helicase 1</fullName>
        <ecNumber>3.6.4.13</ecNumber>
    </recommendedName>
</protein>
<name>RH1_ORYSJ</name>
<gene>
    <name type="ordered locus">Os02g0795900</name>
    <name type="ordered locus">LOC_Os02g55260</name>
    <name type="ORF">OJ1004_E04.4</name>
    <name type="ORF">OJ1695_H09.19</name>
</gene>
<dbReference type="EC" id="3.6.4.13"/>
<dbReference type="EMBL" id="AP003975">
    <property type="protein sequence ID" value="BAD19076.1"/>
    <property type="status" value="ALT_INIT"/>
    <property type="molecule type" value="Genomic_DNA"/>
</dbReference>
<dbReference type="EMBL" id="AP004094">
    <property type="protein sequence ID" value="BAD19277.1"/>
    <property type="status" value="ALT_INIT"/>
    <property type="molecule type" value="Genomic_DNA"/>
</dbReference>
<dbReference type="EMBL" id="AP008208">
    <property type="protein sequence ID" value="BAF10300.1"/>
    <property type="molecule type" value="Genomic_DNA"/>
</dbReference>
<dbReference type="EMBL" id="AP014958">
    <property type="protein sequence ID" value="BAS81361.1"/>
    <property type="molecule type" value="Genomic_DNA"/>
</dbReference>
<dbReference type="EMBL" id="AK105305">
    <property type="protein sequence ID" value="BAG97188.1"/>
    <property type="molecule type" value="mRNA"/>
</dbReference>
<dbReference type="RefSeq" id="XP_015627339.1">
    <property type="nucleotide sequence ID" value="XM_015771853.1"/>
</dbReference>
<dbReference type="RefSeq" id="XP_015627340.1">
    <property type="nucleotide sequence ID" value="XM_015771854.1"/>
</dbReference>
<dbReference type="RefSeq" id="XP_015627342.1">
    <property type="nucleotide sequence ID" value="XM_015771856.1"/>
</dbReference>
<dbReference type="SMR" id="Q0DWT8"/>
<dbReference type="FunCoup" id="Q0DWT8">
    <property type="interactions" value="2635"/>
</dbReference>
<dbReference type="STRING" id="39947.Q0DWT8"/>
<dbReference type="PaxDb" id="39947-Q0DWT8"/>
<dbReference type="EnsemblPlants" id="Os02t0795900-01">
    <property type="protein sequence ID" value="Os02t0795900-01"/>
    <property type="gene ID" value="Os02g0795900"/>
</dbReference>
<dbReference type="GeneID" id="4331005"/>
<dbReference type="Gramene" id="Os02t0795900-01">
    <property type="protein sequence ID" value="Os02t0795900-01"/>
    <property type="gene ID" value="Os02g0795900"/>
</dbReference>
<dbReference type="KEGG" id="dosa:Os02g0795900"/>
<dbReference type="KEGG" id="osa:4331005"/>
<dbReference type="eggNOG" id="KOG0350">
    <property type="taxonomic scope" value="Eukaryota"/>
</dbReference>
<dbReference type="HOGENOM" id="CLU_003041_15_3_1"/>
<dbReference type="InParanoid" id="Q0DWT8"/>
<dbReference type="OMA" id="HEVKAFD"/>
<dbReference type="OrthoDB" id="3370at2759"/>
<dbReference type="Proteomes" id="UP000000763">
    <property type="component" value="Chromosome 2"/>
</dbReference>
<dbReference type="Proteomes" id="UP000059680">
    <property type="component" value="Chromosome 2"/>
</dbReference>
<dbReference type="GO" id="GO:0005634">
    <property type="term" value="C:nucleus"/>
    <property type="evidence" value="ECO:0000318"/>
    <property type="project" value="GO_Central"/>
</dbReference>
<dbReference type="GO" id="GO:0005524">
    <property type="term" value="F:ATP binding"/>
    <property type="evidence" value="ECO:0007669"/>
    <property type="project" value="UniProtKB-KW"/>
</dbReference>
<dbReference type="GO" id="GO:0016887">
    <property type="term" value="F:ATP hydrolysis activity"/>
    <property type="evidence" value="ECO:0007669"/>
    <property type="project" value="RHEA"/>
</dbReference>
<dbReference type="GO" id="GO:0003723">
    <property type="term" value="F:RNA binding"/>
    <property type="evidence" value="ECO:0007669"/>
    <property type="project" value="UniProtKB-KW"/>
</dbReference>
<dbReference type="GO" id="GO:0003724">
    <property type="term" value="F:RNA helicase activity"/>
    <property type="evidence" value="ECO:0007669"/>
    <property type="project" value="UniProtKB-EC"/>
</dbReference>
<dbReference type="CDD" id="cd17956">
    <property type="entry name" value="DEADc_DDX51"/>
    <property type="match status" value="1"/>
</dbReference>
<dbReference type="CDD" id="cd18787">
    <property type="entry name" value="SF2_C_DEAD"/>
    <property type="match status" value="1"/>
</dbReference>
<dbReference type="Gene3D" id="3.40.50.300">
    <property type="entry name" value="P-loop containing nucleotide triphosphate hydrolases"/>
    <property type="match status" value="2"/>
</dbReference>
<dbReference type="InterPro" id="IPR011545">
    <property type="entry name" value="DEAD/DEAH_box_helicase_dom"/>
</dbReference>
<dbReference type="InterPro" id="IPR014001">
    <property type="entry name" value="Helicase_ATP-bd"/>
</dbReference>
<dbReference type="InterPro" id="IPR001650">
    <property type="entry name" value="Helicase_C-like"/>
</dbReference>
<dbReference type="InterPro" id="IPR027417">
    <property type="entry name" value="P-loop_NTPase"/>
</dbReference>
<dbReference type="PANTHER" id="PTHR24031">
    <property type="entry name" value="RNA HELICASE"/>
    <property type="match status" value="1"/>
</dbReference>
<dbReference type="Pfam" id="PF00270">
    <property type="entry name" value="DEAD"/>
    <property type="match status" value="1"/>
</dbReference>
<dbReference type="Pfam" id="PF00271">
    <property type="entry name" value="Helicase_C"/>
    <property type="match status" value="1"/>
</dbReference>
<dbReference type="SMART" id="SM00487">
    <property type="entry name" value="DEXDc"/>
    <property type="match status" value="1"/>
</dbReference>
<dbReference type="SMART" id="SM00490">
    <property type="entry name" value="HELICc"/>
    <property type="match status" value="1"/>
</dbReference>
<dbReference type="SUPFAM" id="SSF52540">
    <property type="entry name" value="P-loop containing nucleoside triphosphate hydrolases"/>
    <property type="match status" value="1"/>
</dbReference>
<dbReference type="PROSITE" id="PS51192">
    <property type="entry name" value="HELICASE_ATP_BIND_1"/>
    <property type="match status" value="1"/>
</dbReference>
<dbReference type="PROSITE" id="PS51194">
    <property type="entry name" value="HELICASE_CTER"/>
    <property type="match status" value="1"/>
</dbReference>
<feature type="chain" id="PRO_0000282505" description="DEAD-box ATP-dependent RNA helicase 1">
    <location>
        <begin position="1"/>
        <end position="521"/>
    </location>
</feature>
<feature type="domain" description="Helicase ATP-binding" evidence="1">
    <location>
        <begin position="72"/>
        <end position="302"/>
    </location>
</feature>
<feature type="domain" description="Helicase C-terminal" evidence="2">
    <location>
        <begin position="330"/>
        <end position="480"/>
    </location>
</feature>
<feature type="region of interest" description="Disordered" evidence="3">
    <location>
        <begin position="1"/>
        <end position="20"/>
    </location>
</feature>
<feature type="region of interest" description="Disordered" evidence="3">
    <location>
        <begin position="495"/>
        <end position="521"/>
    </location>
</feature>
<feature type="short sequence motif" description="Q motif">
    <location>
        <begin position="36"/>
        <end position="65"/>
    </location>
</feature>
<feature type="short sequence motif" description="DEAD box">
    <location>
        <begin position="213"/>
        <end position="216"/>
    </location>
</feature>
<feature type="compositionally biased region" description="Basic and acidic residues" evidence="3">
    <location>
        <begin position="495"/>
        <end position="507"/>
    </location>
</feature>
<feature type="binding site" evidence="1">
    <location>
        <begin position="85"/>
        <end position="92"/>
    </location>
    <ligand>
        <name>ATP</name>
        <dbReference type="ChEBI" id="CHEBI:30616"/>
    </ligand>
</feature>
<reference key="1">
    <citation type="journal article" date="2005" name="Nature">
        <title>The map-based sequence of the rice genome.</title>
        <authorList>
            <consortium name="International rice genome sequencing project (IRGSP)"/>
        </authorList>
    </citation>
    <scope>NUCLEOTIDE SEQUENCE [LARGE SCALE GENOMIC DNA]</scope>
    <source>
        <strain>cv. Nipponbare</strain>
    </source>
</reference>
<reference key="2">
    <citation type="journal article" date="2008" name="Nucleic Acids Res.">
        <title>The rice annotation project database (RAP-DB): 2008 update.</title>
        <authorList>
            <consortium name="The rice annotation project (RAP)"/>
        </authorList>
    </citation>
    <scope>GENOME REANNOTATION</scope>
    <source>
        <strain>cv. Nipponbare</strain>
    </source>
</reference>
<reference key="3">
    <citation type="journal article" date="2013" name="Rice">
        <title>Improvement of the Oryza sativa Nipponbare reference genome using next generation sequence and optical map data.</title>
        <authorList>
            <person name="Kawahara Y."/>
            <person name="de la Bastide M."/>
            <person name="Hamilton J.P."/>
            <person name="Kanamori H."/>
            <person name="McCombie W.R."/>
            <person name="Ouyang S."/>
            <person name="Schwartz D.C."/>
            <person name="Tanaka T."/>
            <person name="Wu J."/>
            <person name="Zhou S."/>
            <person name="Childs K.L."/>
            <person name="Davidson R.M."/>
            <person name="Lin H."/>
            <person name="Quesada-Ocampo L."/>
            <person name="Vaillancourt B."/>
            <person name="Sakai H."/>
            <person name="Lee S.S."/>
            <person name="Kim J."/>
            <person name="Numa H."/>
            <person name="Itoh T."/>
            <person name="Buell C.R."/>
            <person name="Matsumoto T."/>
        </authorList>
    </citation>
    <scope>GENOME REANNOTATION</scope>
    <source>
        <strain>cv. Nipponbare</strain>
    </source>
</reference>
<reference key="4">
    <citation type="journal article" date="2003" name="Science">
        <title>Collection, mapping, and annotation of over 28,000 cDNA clones from japonica rice.</title>
        <authorList>
            <consortium name="The rice full-length cDNA consortium"/>
        </authorList>
    </citation>
    <scope>NUCLEOTIDE SEQUENCE [LARGE SCALE MRNA]</scope>
    <source>
        <strain>cv. Nipponbare</strain>
    </source>
</reference>
<organism>
    <name type="scientific">Oryza sativa subsp. japonica</name>
    <name type="common">Rice</name>
    <dbReference type="NCBI Taxonomy" id="39947"/>
    <lineage>
        <taxon>Eukaryota</taxon>
        <taxon>Viridiplantae</taxon>
        <taxon>Streptophyta</taxon>
        <taxon>Embryophyta</taxon>
        <taxon>Tracheophyta</taxon>
        <taxon>Spermatophyta</taxon>
        <taxon>Magnoliopsida</taxon>
        <taxon>Liliopsida</taxon>
        <taxon>Poales</taxon>
        <taxon>Poaceae</taxon>
        <taxon>BOP clade</taxon>
        <taxon>Oryzoideae</taxon>
        <taxon>Oryzeae</taxon>
        <taxon>Oryzinae</taxon>
        <taxon>Oryza</taxon>
        <taxon>Oryza sativa</taxon>
    </lineage>
</organism>
<evidence type="ECO:0000255" key="1">
    <source>
        <dbReference type="PROSITE-ProRule" id="PRU00541"/>
    </source>
</evidence>
<evidence type="ECO:0000255" key="2">
    <source>
        <dbReference type="PROSITE-ProRule" id="PRU00542"/>
    </source>
</evidence>
<evidence type="ECO:0000256" key="3">
    <source>
        <dbReference type="SAM" id="MobiDB-lite"/>
    </source>
</evidence>
<evidence type="ECO:0000305" key="4"/>
<proteinExistence type="evidence at transcript level"/>
<keyword id="KW-0067">ATP-binding</keyword>
<keyword id="KW-0347">Helicase</keyword>
<keyword id="KW-0378">Hydrolase</keyword>
<keyword id="KW-0547">Nucleotide-binding</keyword>
<keyword id="KW-1185">Reference proteome</keyword>
<keyword id="KW-0694">RNA-binding</keyword>
<sequence>MVVAMATKEEEGGPSSRVPHLPWMRNPVDIDSFSGCPVAHLPRLDPRLVKPLQRMGIESFFPVQVAAWLETIGPGAFERDICINSPTGSGKTLAYALPIVQMLATRKVRCLRALVVLPTRDLALQVKEVFDAIAPVVGLSVGSAVGQSSIADEVSNLIEKSKQGLFPSLDEEYIQMEPQTKVDILVATPGRLMDHISMTKGFSLEHLQYLVVDETDRMLREAYQSWLPTVIQLTRSSDQNHSWSDMNGETLLHPLTTIRRSGVERGFKGKSFPRLAKIVLSATLTQDPSKLSQLELQHPLLLNSGKKRYRIPTKLQSYKLVCKSNLKPLSLIVLLQELRGEKCLVFTSSVESSHRLSTLLEFFEDLPFKFSEYSRLQRESTRRKTLDAFKEGKIDVLIGTDRMARGIHIDGLRYVINYDMPPYVKTYIHRAGRTARAGESGSCFTFLRKHEVKAFDKMLKKADNSSCSLHSLPEESVETLRPVFSSALKKLEESLESEATKKSKSGDKAPNASKRKRTINT</sequence>
<comment type="catalytic activity">
    <reaction>
        <text>ATP + H2O = ADP + phosphate + H(+)</text>
        <dbReference type="Rhea" id="RHEA:13065"/>
        <dbReference type="ChEBI" id="CHEBI:15377"/>
        <dbReference type="ChEBI" id="CHEBI:15378"/>
        <dbReference type="ChEBI" id="CHEBI:30616"/>
        <dbReference type="ChEBI" id="CHEBI:43474"/>
        <dbReference type="ChEBI" id="CHEBI:456216"/>
        <dbReference type="EC" id="3.6.4.13"/>
    </reaction>
</comment>
<comment type="domain">
    <text>The Q motif is unique to and characteristic of the DEAD box family of RNA helicases and controls ATP binding and hydrolysis.</text>
</comment>
<comment type="similarity">
    <text evidence="4">Belongs to the DEAD box helicase family. DDX51/DBP6 subfamily.</text>
</comment>
<comment type="sequence caution" evidence="4">
    <conflict type="erroneous initiation">
        <sequence resource="EMBL-CDS" id="BAD19076"/>
    </conflict>
</comment>
<comment type="sequence caution" evidence="4">
    <conflict type="erroneous initiation">
        <sequence resource="EMBL-CDS" id="BAD19277"/>
    </conflict>
</comment>